<organism>
    <name type="scientific">Caenorhabditis elegans</name>
    <dbReference type="NCBI Taxonomy" id="6239"/>
    <lineage>
        <taxon>Eukaryota</taxon>
        <taxon>Metazoa</taxon>
        <taxon>Ecdysozoa</taxon>
        <taxon>Nematoda</taxon>
        <taxon>Chromadorea</taxon>
        <taxon>Rhabditida</taxon>
        <taxon>Rhabditina</taxon>
        <taxon>Rhabditomorpha</taxon>
        <taxon>Rhabditoidea</taxon>
        <taxon>Rhabditidae</taxon>
        <taxon>Peloderinae</taxon>
        <taxon>Caenorhabditis</taxon>
    </lineage>
</organism>
<reference key="1">
    <citation type="journal article" date="2005" name="J. Mol. Evol.">
        <title>Explosive lineage-specific expansion of the orphan nuclear receptor HNF4 in nematodes.</title>
        <authorList>
            <person name="Robinson-Rechavi M."/>
            <person name="Maina C.V."/>
            <person name="Gissendanner C.R."/>
            <person name="Laudet V."/>
            <person name="Sluder A."/>
        </authorList>
    </citation>
    <scope>NUCLEOTIDE SEQUENCE [MRNA] (ISOFORMS A AND B)</scope>
</reference>
<reference key="2">
    <citation type="journal article" date="1998" name="Science">
        <title>Genome sequence of the nematode C. elegans: a platform for investigating biology.</title>
        <authorList>
            <consortium name="The C. elegans sequencing consortium"/>
        </authorList>
    </citation>
    <scope>NUCLEOTIDE SEQUENCE [LARGE SCALE GENOMIC DNA]</scope>
    <source>
        <strain>Bristol N2</strain>
    </source>
</reference>
<name>NHR85_CAEEL</name>
<feature type="chain" id="PRO_0000053797" description="Nuclear hormone receptor family member nhr-85">
    <location>
        <begin position="1"/>
        <end position="514"/>
    </location>
</feature>
<feature type="domain" description="NR LBD" evidence="2">
    <location>
        <begin position="216"/>
        <end position="514"/>
    </location>
</feature>
<feature type="DNA-binding region" description="Nuclear receptor" evidence="1">
    <location>
        <begin position="110"/>
        <end position="186"/>
    </location>
</feature>
<feature type="zinc finger region" description="NR C4-type" evidence="1">
    <location>
        <begin position="113"/>
        <end position="133"/>
    </location>
</feature>
<feature type="zinc finger region" description="NR C4-type" evidence="1">
    <location>
        <begin position="150"/>
        <end position="174"/>
    </location>
</feature>
<feature type="region of interest" description="Disordered" evidence="3">
    <location>
        <begin position="28"/>
        <end position="48"/>
    </location>
</feature>
<feature type="region of interest" description="Disordered" evidence="3">
    <location>
        <begin position="465"/>
        <end position="514"/>
    </location>
</feature>
<feature type="splice variant" id="VSP_007340" description="In isoform a." evidence="4">
    <location>
        <begin position="1"/>
        <end position="178"/>
    </location>
</feature>
<sequence length="514" mass="56132">MDLSTSGSLPCHLPLSLLTNLQTPPIDTSFSSPPATSSSSLLSPSPSSAFRPVVPKSLMNPQPAMDTFYMSAIQSLVVSTTNDDQYSEHGALEGSKSLAKDENASTSAGTILCQVCSDKASGFHYGVFACEGCKGFFRRSIQQKITYRACTRAEDCLILRNNRNRCQCCRLKKCLAVGMSRDAVRFGRVPKREKARMFEEMQKTNVQSQRDQIAIQYENLTEVMHKINQAFGTLQATLEKCTGPIYTDRCPITSNFIVIPLKAAIDFANSIPAFLSITQTQRVHLLQNSVFDVMLLASASASTSQHFPPGGLTYDQSSANPIIPQAIQSISARIRQLPPQTVPILTAIAVCQADLLPESQQPMLLAERLWCVLGKLGGIQSLATAPSLLADVRTLRQWHSDRLRQMSQISQHFSQNLLIAPVAAAAPVLLPPAFLSPPASATSTSSSSVKSEFIERHPSIASLLERPRRISSSGAQEPLNLSLPHVRHQVKRDVDSDEQLEEMKVSPVPTTLSE</sequence>
<accession>Q9XUK7</accession>
<accession>Q6BER3</accession>
<keyword id="KW-0025">Alternative splicing</keyword>
<keyword id="KW-0238">DNA-binding</keyword>
<keyword id="KW-0479">Metal-binding</keyword>
<keyword id="KW-0539">Nucleus</keyword>
<keyword id="KW-0675">Receptor</keyword>
<keyword id="KW-1185">Reference proteome</keyword>
<keyword id="KW-0804">Transcription</keyword>
<keyword id="KW-0805">Transcription regulation</keyword>
<keyword id="KW-0862">Zinc</keyword>
<keyword id="KW-0863">Zinc-finger</keyword>
<comment type="function">
    <text>Orphan nuclear receptor.</text>
</comment>
<comment type="subcellular location">
    <subcellularLocation>
        <location evidence="1">Nucleus</location>
    </subcellularLocation>
</comment>
<comment type="alternative products">
    <event type="alternative splicing"/>
    <isoform>
        <id>Q9XUK7-1</id>
        <name>b</name>
        <sequence type="displayed"/>
    </isoform>
    <isoform>
        <id>Q9XUK7-2</id>
        <name>a</name>
        <sequence type="described" ref="VSP_007340"/>
    </isoform>
</comment>
<comment type="similarity">
    <text evidence="5">Belongs to the nuclear hormone receptor family.</text>
</comment>
<protein>
    <recommendedName>
        <fullName>Nuclear hormone receptor family member nhr-85</fullName>
    </recommendedName>
</protein>
<dbReference type="EMBL" id="AY204180">
    <property type="protein sequence ID" value="AAO39184.1"/>
    <property type="molecule type" value="mRNA"/>
</dbReference>
<dbReference type="EMBL" id="AY204181">
    <property type="protein sequence ID" value="AAO39185.1"/>
    <property type="molecule type" value="mRNA"/>
</dbReference>
<dbReference type="EMBL" id="Z82071">
    <property type="protein sequence ID" value="CAB04919.2"/>
    <property type="molecule type" value="Genomic_DNA"/>
</dbReference>
<dbReference type="EMBL" id="AL110478">
    <property type="protein sequence ID" value="CAB04919.2"/>
    <property type="status" value="JOINED"/>
    <property type="molecule type" value="Genomic_DNA"/>
</dbReference>
<dbReference type="EMBL" id="Z82071">
    <property type="protein sequence ID" value="CAH04734.1"/>
    <property type="molecule type" value="Genomic_DNA"/>
</dbReference>
<dbReference type="PIR" id="T26189">
    <property type="entry name" value="T26189"/>
</dbReference>
<dbReference type="RefSeq" id="NP_001021667.1">
    <molecule id="Q9XUK7-1"/>
    <property type="nucleotide sequence ID" value="NM_001026496.3"/>
</dbReference>
<dbReference type="RefSeq" id="NP_001021668.1">
    <molecule id="Q9XUK7-2"/>
    <property type="nucleotide sequence ID" value="NM_001026497.4"/>
</dbReference>
<dbReference type="SMR" id="Q9XUK7"/>
<dbReference type="BioGRID" id="56227">
    <property type="interactions" value="6"/>
</dbReference>
<dbReference type="FunCoup" id="Q9XUK7">
    <property type="interactions" value="82"/>
</dbReference>
<dbReference type="IntAct" id="Q9XUK7">
    <property type="interactions" value="6"/>
</dbReference>
<dbReference type="STRING" id="6239.W05B5.3a.1"/>
<dbReference type="PaxDb" id="6239-W05B5.3a"/>
<dbReference type="EnsemblMetazoa" id="W05B5.3a.1">
    <molecule id="Q9XUK7-1"/>
    <property type="protein sequence ID" value="W05B5.3a.1"/>
    <property type="gene ID" value="WBGene00003675"/>
</dbReference>
<dbReference type="EnsemblMetazoa" id="W05B5.3b.1">
    <molecule id="Q9XUK7-2"/>
    <property type="protein sequence ID" value="W05B5.3b.1"/>
    <property type="gene ID" value="WBGene00003675"/>
</dbReference>
<dbReference type="GeneID" id="191732"/>
<dbReference type="KEGG" id="cel:CELE_W05B5.3"/>
<dbReference type="UCSC" id="W05B5.3b.2">
    <molecule id="Q9XUK7-1"/>
    <property type="organism name" value="c. elegans"/>
</dbReference>
<dbReference type="AGR" id="WB:WBGene00003675"/>
<dbReference type="CTD" id="191732"/>
<dbReference type="WormBase" id="W05B5.3a">
    <molecule id="Q9XUK7-1"/>
    <property type="protein sequence ID" value="CE26023"/>
    <property type="gene ID" value="WBGene00003675"/>
    <property type="gene designation" value="nhr-85"/>
</dbReference>
<dbReference type="WormBase" id="W05B5.3b">
    <molecule id="Q9XUK7-2"/>
    <property type="protein sequence ID" value="CE20150"/>
    <property type="gene ID" value="WBGene00003675"/>
    <property type="gene designation" value="nhr-85"/>
</dbReference>
<dbReference type="eggNOG" id="KOG4846">
    <property type="taxonomic scope" value="Eukaryota"/>
</dbReference>
<dbReference type="HOGENOM" id="CLU_585576_0_0_1"/>
<dbReference type="InParanoid" id="Q9XUK7"/>
<dbReference type="OMA" id="EKCTGPI"/>
<dbReference type="OrthoDB" id="7634782at2759"/>
<dbReference type="PhylomeDB" id="Q9XUK7"/>
<dbReference type="Reactome" id="R-CEL-200425">
    <property type="pathway name" value="Carnitine shuttle"/>
</dbReference>
<dbReference type="Reactome" id="R-CEL-381340">
    <property type="pathway name" value="Transcriptional regulation of white adipocyte differentiation"/>
</dbReference>
<dbReference type="Reactome" id="R-CEL-383280">
    <property type="pathway name" value="Nuclear Receptor transcription pathway"/>
</dbReference>
<dbReference type="Reactome" id="R-CEL-400206">
    <property type="pathway name" value="Regulation of lipid metabolism by PPARalpha"/>
</dbReference>
<dbReference type="Reactome" id="R-CEL-4090294">
    <property type="pathway name" value="SUMOylation of intracellular receptors"/>
</dbReference>
<dbReference type="Reactome" id="R-CEL-5362517">
    <property type="pathway name" value="Signaling by Retinoic Acid"/>
</dbReference>
<dbReference type="Reactome" id="R-CEL-9616222">
    <property type="pathway name" value="Transcriptional regulation of granulopoiesis"/>
</dbReference>
<dbReference type="Reactome" id="R-CEL-9841922">
    <property type="pathway name" value="MLL4 and MLL3 complexes regulate expression of PPARG target genes in adipogenesis and hepatic steatosis"/>
</dbReference>
<dbReference type="PRO" id="PR:Q9XUK7"/>
<dbReference type="Proteomes" id="UP000001940">
    <property type="component" value="Chromosome I"/>
</dbReference>
<dbReference type="Bgee" id="WBGene00003675">
    <property type="expression patterns" value="Expressed in larva and 3 other cell types or tissues"/>
</dbReference>
<dbReference type="GO" id="GO:0005634">
    <property type="term" value="C:nucleus"/>
    <property type="evidence" value="ECO:0000318"/>
    <property type="project" value="GO_Central"/>
</dbReference>
<dbReference type="GO" id="GO:0004879">
    <property type="term" value="F:nuclear receptor activity"/>
    <property type="evidence" value="ECO:0000318"/>
    <property type="project" value="GO_Central"/>
</dbReference>
<dbReference type="GO" id="GO:0000978">
    <property type="term" value="F:RNA polymerase II cis-regulatory region sequence-specific DNA binding"/>
    <property type="evidence" value="ECO:0000318"/>
    <property type="project" value="GO_Central"/>
</dbReference>
<dbReference type="GO" id="GO:0008270">
    <property type="term" value="F:zinc ion binding"/>
    <property type="evidence" value="ECO:0007669"/>
    <property type="project" value="UniProtKB-KW"/>
</dbReference>
<dbReference type="GO" id="GO:0030154">
    <property type="term" value="P:cell differentiation"/>
    <property type="evidence" value="ECO:0000318"/>
    <property type="project" value="GO_Central"/>
</dbReference>
<dbReference type="GO" id="GO:0009755">
    <property type="term" value="P:hormone-mediated signaling pathway"/>
    <property type="evidence" value="ECO:0000318"/>
    <property type="project" value="GO_Central"/>
</dbReference>
<dbReference type="GO" id="GO:0030522">
    <property type="term" value="P:intracellular receptor signaling pathway"/>
    <property type="evidence" value="ECO:0000318"/>
    <property type="project" value="GO_Central"/>
</dbReference>
<dbReference type="GO" id="GO:0000122">
    <property type="term" value="P:negative regulation of transcription by RNA polymerase II"/>
    <property type="evidence" value="ECO:0000318"/>
    <property type="project" value="GO_Central"/>
</dbReference>
<dbReference type="GO" id="GO:0045944">
    <property type="term" value="P:positive regulation of transcription by RNA polymerase II"/>
    <property type="evidence" value="ECO:0000318"/>
    <property type="project" value="GO_Central"/>
</dbReference>
<dbReference type="CDD" id="cd07166">
    <property type="entry name" value="NR_DBD_REV_ERB"/>
    <property type="match status" value="1"/>
</dbReference>
<dbReference type="FunFam" id="3.30.50.10:FF:000013">
    <property type="entry name" value="Nuclear receptor subfamily 1 group D member 2"/>
    <property type="match status" value="1"/>
</dbReference>
<dbReference type="FunFam" id="1.10.565.10:FF:000069">
    <property type="entry name" value="Protein CBR-NHR-85"/>
    <property type="match status" value="1"/>
</dbReference>
<dbReference type="Gene3D" id="3.30.50.10">
    <property type="entry name" value="Erythroid Transcription Factor GATA-1, subunit A"/>
    <property type="match status" value="1"/>
</dbReference>
<dbReference type="Gene3D" id="1.10.565.10">
    <property type="entry name" value="Retinoid X Receptor"/>
    <property type="match status" value="1"/>
</dbReference>
<dbReference type="InterPro" id="IPR035500">
    <property type="entry name" value="NHR-like_dom_sf"/>
</dbReference>
<dbReference type="InterPro" id="IPR000536">
    <property type="entry name" value="Nucl_hrmn_rcpt_lig-bd"/>
</dbReference>
<dbReference type="InterPro" id="IPR050234">
    <property type="entry name" value="Nuclear_hormone_rcpt_NR1"/>
</dbReference>
<dbReference type="InterPro" id="IPR001723">
    <property type="entry name" value="Nuclear_hrmn_rcpt"/>
</dbReference>
<dbReference type="InterPro" id="IPR001628">
    <property type="entry name" value="Znf_hrmn_rcpt"/>
</dbReference>
<dbReference type="InterPro" id="IPR013088">
    <property type="entry name" value="Znf_NHR/GATA"/>
</dbReference>
<dbReference type="PANTHER" id="PTHR24082">
    <property type="entry name" value="NUCLEAR HORMONE RECEPTOR"/>
    <property type="match status" value="1"/>
</dbReference>
<dbReference type="PANTHER" id="PTHR24082:SF334">
    <property type="entry name" value="NUCLEAR HORMONE RECEPTOR FAMILY MEMBER NHR-85"/>
    <property type="match status" value="1"/>
</dbReference>
<dbReference type="Pfam" id="PF00105">
    <property type="entry name" value="zf-C4"/>
    <property type="match status" value="1"/>
</dbReference>
<dbReference type="PRINTS" id="PR00398">
    <property type="entry name" value="STRDHORMONER"/>
</dbReference>
<dbReference type="PRINTS" id="PR00047">
    <property type="entry name" value="STROIDFINGER"/>
</dbReference>
<dbReference type="SMART" id="SM00430">
    <property type="entry name" value="HOLI"/>
    <property type="match status" value="1"/>
</dbReference>
<dbReference type="SMART" id="SM00399">
    <property type="entry name" value="ZnF_C4"/>
    <property type="match status" value="1"/>
</dbReference>
<dbReference type="SUPFAM" id="SSF57716">
    <property type="entry name" value="Glucocorticoid receptor-like (DNA-binding domain)"/>
    <property type="match status" value="1"/>
</dbReference>
<dbReference type="SUPFAM" id="SSF48508">
    <property type="entry name" value="Nuclear receptor ligand-binding domain"/>
    <property type="match status" value="1"/>
</dbReference>
<dbReference type="PROSITE" id="PS51843">
    <property type="entry name" value="NR_LBD"/>
    <property type="match status" value="1"/>
</dbReference>
<dbReference type="PROSITE" id="PS00031">
    <property type="entry name" value="NUCLEAR_REC_DBD_1"/>
    <property type="match status" value="1"/>
</dbReference>
<dbReference type="PROSITE" id="PS51030">
    <property type="entry name" value="NUCLEAR_REC_DBD_2"/>
    <property type="match status" value="1"/>
</dbReference>
<proteinExistence type="evidence at transcript level"/>
<evidence type="ECO:0000255" key="1">
    <source>
        <dbReference type="PROSITE-ProRule" id="PRU00407"/>
    </source>
</evidence>
<evidence type="ECO:0000255" key="2">
    <source>
        <dbReference type="PROSITE-ProRule" id="PRU01189"/>
    </source>
</evidence>
<evidence type="ECO:0000256" key="3">
    <source>
        <dbReference type="SAM" id="MobiDB-lite"/>
    </source>
</evidence>
<evidence type="ECO:0000303" key="4">
    <source>
    </source>
</evidence>
<evidence type="ECO:0000305" key="5"/>
<gene>
    <name type="primary">nhr-85</name>
    <name type="ORF">W05B5.3</name>
</gene>